<proteinExistence type="inferred from homology"/>
<gene>
    <name evidence="1" type="primary">bamC</name>
    <name type="ordered locus">Ssed_2429</name>
</gene>
<organism>
    <name type="scientific">Shewanella sediminis (strain HAW-EB3)</name>
    <dbReference type="NCBI Taxonomy" id="425104"/>
    <lineage>
        <taxon>Bacteria</taxon>
        <taxon>Pseudomonadati</taxon>
        <taxon>Pseudomonadota</taxon>
        <taxon>Gammaproteobacteria</taxon>
        <taxon>Alteromonadales</taxon>
        <taxon>Shewanellaceae</taxon>
        <taxon>Shewanella</taxon>
    </lineage>
</organism>
<keyword id="KW-0998">Cell outer membrane</keyword>
<keyword id="KW-0449">Lipoprotein</keyword>
<keyword id="KW-0472">Membrane</keyword>
<keyword id="KW-0564">Palmitate</keyword>
<keyword id="KW-1185">Reference proteome</keyword>
<keyword id="KW-0732">Signal</keyword>
<protein>
    <recommendedName>
        <fullName evidence="1">Outer membrane protein assembly factor BamC</fullName>
    </recommendedName>
</protein>
<feature type="signal peptide" evidence="1">
    <location>
        <begin position="1"/>
        <end position="16"/>
    </location>
</feature>
<feature type="chain" id="PRO_5000278395" description="Outer membrane protein assembly factor BamC">
    <location>
        <begin position="17"/>
        <end position="373"/>
    </location>
</feature>
<feature type="lipid moiety-binding region" description="N-palmitoyl cysteine" evidence="1">
    <location>
        <position position="17"/>
    </location>
</feature>
<feature type="lipid moiety-binding region" description="S-diacylglycerol cysteine" evidence="1">
    <location>
        <position position="17"/>
    </location>
</feature>
<accession>A8FW15</accession>
<name>BAMC_SHESH</name>
<reference key="1">
    <citation type="submission" date="2007-08" db="EMBL/GenBank/DDBJ databases">
        <title>Complete sequence of Shewanella sediminis HAW-EB3.</title>
        <authorList>
            <consortium name="US DOE Joint Genome Institute"/>
            <person name="Copeland A."/>
            <person name="Lucas S."/>
            <person name="Lapidus A."/>
            <person name="Barry K."/>
            <person name="Glavina del Rio T."/>
            <person name="Dalin E."/>
            <person name="Tice H."/>
            <person name="Pitluck S."/>
            <person name="Chertkov O."/>
            <person name="Brettin T."/>
            <person name="Bruce D."/>
            <person name="Detter J.C."/>
            <person name="Han C."/>
            <person name="Schmutz J."/>
            <person name="Larimer F."/>
            <person name="Land M."/>
            <person name="Hauser L."/>
            <person name="Kyrpides N."/>
            <person name="Kim E."/>
            <person name="Zhao J.-S."/>
            <person name="Richardson P."/>
        </authorList>
    </citation>
    <scope>NUCLEOTIDE SEQUENCE [LARGE SCALE GENOMIC DNA]</scope>
    <source>
        <strain>HAW-EB3</strain>
    </source>
</reference>
<evidence type="ECO:0000255" key="1">
    <source>
        <dbReference type="HAMAP-Rule" id="MF_00924"/>
    </source>
</evidence>
<sequence length="373" mass="42319">MLKQVTPLVLIAAVTACSSPVERRQANGGDEYTNVKVQPALTIPEGLNAPTYSKEFDIPKLNSKADDKLVGKLLDIRPPLQVLPMAEGTHVEESGDSIKIVVESIDKDVDLKQELYTVLNNYLASQSINVLSEDYDKGLIETDWIENEEVIDSSFWGSDEIYQLRQRYQFEVDVRPHGRSGNIAINLIDHEESFDGKQQNILLSGEDKRRYTIDMLNNAVAYMSVKRSQAIKAKRLRESLGIDVNVVKGAPATVEGEAAEQSYWLADAPFERTWDRLRIVLPEMGFEIVDMDSNKGLYYINVNDDSGFWSSLWSEKKLPVEEGSYRMLLKEGDSEDKTRIYLHNSEDKPLDNVVVEAVYEGFSELMQEDRKIR</sequence>
<comment type="function">
    <text evidence="1">Part of the outer membrane protein assembly complex, which is involved in assembly and insertion of beta-barrel proteins into the outer membrane.</text>
</comment>
<comment type="subunit">
    <text evidence="1">Part of the Bam complex.</text>
</comment>
<comment type="subcellular location">
    <subcellularLocation>
        <location evidence="1">Cell outer membrane</location>
        <topology evidence="1">Lipid-anchor</topology>
    </subcellularLocation>
</comment>
<comment type="similarity">
    <text evidence="1">Belongs to the BamC family.</text>
</comment>
<dbReference type="EMBL" id="CP000821">
    <property type="protein sequence ID" value="ABV37038.1"/>
    <property type="molecule type" value="Genomic_DNA"/>
</dbReference>
<dbReference type="RefSeq" id="WP_012142773.1">
    <property type="nucleotide sequence ID" value="NC_009831.1"/>
</dbReference>
<dbReference type="SMR" id="A8FW15"/>
<dbReference type="STRING" id="425104.Ssed_2429"/>
<dbReference type="KEGG" id="sse:Ssed_2429"/>
<dbReference type="eggNOG" id="COG3317">
    <property type="taxonomic scope" value="Bacteria"/>
</dbReference>
<dbReference type="HOGENOM" id="CLU_063217_0_0_6"/>
<dbReference type="OrthoDB" id="5598420at2"/>
<dbReference type="Proteomes" id="UP000002015">
    <property type="component" value="Chromosome"/>
</dbReference>
<dbReference type="GO" id="GO:0009279">
    <property type="term" value="C:cell outer membrane"/>
    <property type="evidence" value="ECO:0007669"/>
    <property type="project" value="UniProtKB-SubCell"/>
</dbReference>
<dbReference type="GO" id="GO:0043165">
    <property type="term" value="P:Gram-negative-bacterium-type cell outer membrane assembly"/>
    <property type="evidence" value="ECO:0007669"/>
    <property type="project" value="UniProtKB-UniRule"/>
</dbReference>
<dbReference type="GO" id="GO:0051205">
    <property type="term" value="P:protein insertion into membrane"/>
    <property type="evidence" value="ECO:0007669"/>
    <property type="project" value="UniProtKB-UniRule"/>
</dbReference>
<dbReference type="Gene3D" id="3.30.530.50">
    <property type="match status" value="1"/>
</dbReference>
<dbReference type="Gene3D" id="3.30.310.170">
    <property type="entry name" value="Outer membrane protein assembly factor BamC"/>
    <property type="match status" value="1"/>
</dbReference>
<dbReference type="HAMAP" id="MF_00924">
    <property type="entry name" value="OM_assembly_BamC"/>
    <property type="match status" value="1"/>
</dbReference>
<dbReference type="InterPro" id="IPR014524">
    <property type="entry name" value="BamC"/>
</dbReference>
<dbReference type="InterPro" id="IPR042268">
    <property type="entry name" value="BamC_C"/>
</dbReference>
<dbReference type="InterPro" id="IPR010653">
    <property type="entry name" value="NlpB/DapX"/>
</dbReference>
<dbReference type="Pfam" id="PF06804">
    <property type="entry name" value="Lipoprotein_18"/>
    <property type="match status" value="1"/>
</dbReference>
<dbReference type="PIRSF" id="PIRSF026343">
    <property type="entry name" value="NlpB"/>
    <property type="match status" value="1"/>
</dbReference>
<dbReference type="PROSITE" id="PS51257">
    <property type="entry name" value="PROKAR_LIPOPROTEIN"/>
    <property type="match status" value="1"/>
</dbReference>